<proteinExistence type="inferred from homology"/>
<accession>Q0DZ85</accession>
<accession>Q6H5U4</accession>
<sequence>MAAFSSSSSAPMLIRSVLFVSLLSAAFVFDSGEAGAAHRVVDPEWHPATATWYGSADGDGSDGGACGYGTLVDVVPMKTRVGAVSPVLFKGGEGCGACYKVRCLDASICSRRAVTVIVTDECPGGVCAFGRTHFDLSGAAFARLAVAGHGGQLQNRGEISVVYRRTACKYGGKNIAFHVNEGSTTFWLSLLVEFEDGDGDIGSMQLKQANSAQWQDMKHIWGATWSLTPGPLVGPFSVRLTTLTTRQTLSAQDVIPKNWTPKATYTSRLNFA</sequence>
<evidence type="ECO:0000250" key="1"/>
<evidence type="ECO:0000255" key="2"/>
<evidence type="ECO:0000255" key="3">
    <source>
        <dbReference type="PROSITE-ProRule" id="PRU00078"/>
    </source>
</evidence>
<evidence type="ECO:0000255" key="4">
    <source>
        <dbReference type="PROSITE-ProRule" id="PRU00079"/>
    </source>
</evidence>
<evidence type="ECO:0000305" key="5"/>
<comment type="function">
    <text evidence="1">May cause loosening and extension of plant cell walls by disrupting non-covalent bonding between cellulose microfibrils and matrix glucans. No enzymatic activity has been found. May be required for rapid internodal elongation in deepwater rice during submergence (By similarity).</text>
</comment>
<comment type="subcellular location">
    <subcellularLocation>
        <location evidence="1">Secreted</location>
        <location evidence="1">Cell wall</location>
    </subcellularLocation>
    <subcellularLocation>
        <location evidence="1">Membrane</location>
        <topology evidence="1">Peripheral membrane protein</topology>
    </subcellularLocation>
</comment>
<comment type="similarity">
    <text evidence="5">Belongs to the expansin family. Expansin B subfamily.</text>
</comment>
<comment type="sequence caution" evidence="5">
    <conflict type="erroneous gene model prediction">
        <sequence resource="EMBL-CDS" id="BAD25350"/>
    </conflict>
</comment>
<comment type="sequence caution" evidence="5">
    <conflict type="erroneous gene model prediction">
        <sequence resource="EMBL-CDS" id="BAD25905"/>
    </conflict>
</comment>
<comment type="online information" name="EXPANSIN homepage">
    <link uri="https://www.dept.psu.edu/biology/groups/expansins/index.htm"/>
</comment>
<organism>
    <name type="scientific">Oryza sativa subsp. japonica</name>
    <name type="common">Rice</name>
    <dbReference type="NCBI Taxonomy" id="39947"/>
    <lineage>
        <taxon>Eukaryota</taxon>
        <taxon>Viridiplantae</taxon>
        <taxon>Streptophyta</taxon>
        <taxon>Embryophyta</taxon>
        <taxon>Tracheophyta</taxon>
        <taxon>Spermatophyta</taxon>
        <taxon>Magnoliopsida</taxon>
        <taxon>Liliopsida</taxon>
        <taxon>Poales</taxon>
        <taxon>Poaceae</taxon>
        <taxon>BOP clade</taxon>
        <taxon>Oryzoideae</taxon>
        <taxon>Oryzeae</taxon>
        <taxon>Oryzinae</taxon>
        <taxon>Oryza</taxon>
        <taxon>Oryza sativa</taxon>
    </lineage>
</organism>
<gene>
    <name type="primary">EXPB16</name>
    <name type="ordered locus">Os02g0639500</name>
    <name type="ordered locus">LOC_Os02g42650</name>
    <name type="ORF">OSJNBa0014E22.43</name>
    <name type="ORF">P0010C01.19</name>
</gene>
<keyword id="KW-0134">Cell wall</keyword>
<keyword id="KW-0961">Cell wall biogenesis/degradation</keyword>
<keyword id="KW-1015">Disulfide bond</keyword>
<keyword id="KW-0472">Membrane</keyword>
<keyword id="KW-1185">Reference proteome</keyword>
<keyword id="KW-0964">Secreted</keyword>
<keyword id="KW-0732">Signal</keyword>
<reference key="1">
    <citation type="journal article" date="2005" name="Nature">
        <title>The map-based sequence of the rice genome.</title>
        <authorList>
            <consortium name="International rice genome sequencing project (IRGSP)"/>
        </authorList>
    </citation>
    <scope>NUCLEOTIDE SEQUENCE [LARGE SCALE GENOMIC DNA]</scope>
    <source>
        <strain>cv. Nipponbare</strain>
    </source>
</reference>
<reference key="2">
    <citation type="journal article" date="2008" name="Nucleic Acids Res.">
        <title>The rice annotation project database (RAP-DB): 2008 update.</title>
        <authorList>
            <consortium name="The rice annotation project (RAP)"/>
        </authorList>
    </citation>
    <scope>GENOME REANNOTATION</scope>
    <source>
        <strain>cv. Nipponbare</strain>
    </source>
</reference>
<reference key="3">
    <citation type="journal article" date="2013" name="Rice">
        <title>Improvement of the Oryza sativa Nipponbare reference genome using next generation sequence and optical map data.</title>
        <authorList>
            <person name="Kawahara Y."/>
            <person name="de la Bastide M."/>
            <person name="Hamilton J.P."/>
            <person name="Kanamori H."/>
            <person name="McCombie W.R."/>
            <person name="Ouyang S."/>
            <person name="Schwartz D.C."/>
            <person name="Tanaka T."/>
            <person name="Wu J."/>
            <person name="Zhou S."/>
            <person name="Childs K.L."/>
            <person name="Davidson R.M."/>
            <person name="Lin H."/>
            <person name="Quesada-Ocampo L."/>
            <person name="Vaillancourt B."/>
            <person name="Sakai H."/>
            <person name="Lee S.S."/>
            <person name="Kim J."/>
            <person name="Numa H."/>
            <person name="Itoh T."/>
            <person name="Buell C.R."/>
            <person name="Matsumoto T."/>
        </authorList>
    </citation>
    <scope>GENOME REANNOTATION</scope>
    <source>
        <strain>cv. Nipponbare</strain>
    </source>
</reference>
<reference key="4">
    <citation type="journal article" date="2004" name="Plant Mol. Biol.">
        <title>Nomenclature for members of the expansin superfamily of genes and proteins.</title>
        <authorList>
            <person name="Kende H."/>
            <person name="Bradford K.J."/>
            <person name="Brummell D.A."/>
            <person name="Cho H.-T."/>
            <person name="Cosgrove D.J."/>
            <person name="Fleming A.J."/>
            <person name="Gehring C."/>
            <person name="Lee Y."/>
            <person name="McQueen-Mason S.J."/>
            <person name="Rose J.K.C."/>
            <person name="Voesenek L.A.C."/>
        </authorList>
    </citation>
    <scope>NOMENCLATURE</scope>
</reference>
<dbReference type="EMBL" id="AP004768">
    <property type="protein sequence ID" value="BAD25350.1"/>
    <property type="status" value="ALT_SEQ"/>
    <property type="molecule type" value="Genomic_DNA"/>
</dbReference>
<dbReference type="EMBL" id="AP005513">
    <property type="protein sequence ID" value="BAD25905.1"/>
    <property type="status" value="ALT_SEQ"/>
    <property type="molecule type" value="Genomic_DNA"/>
</dbReference>
<dbReference type="EMBL" id="AP008208">
    <property type="protein sequence ID" value="BAF09453.1"/>
    <property type="molecule type" value="Genomic_DNA"/>
</dbReference>
<dbReference type="EMBL" id="AP014958">
    <property type="status" value="NOT_ANNOTATED_CDS"/>
    <property type="molecule type" value="Genomic_DNA"/>
</dbReference>
<dbReference type="RefSeq" id="XP_015624223.1">
    <property type="nucleotide sequence ID" value="XM_015768737.1"/>
</dbReference>
<dbReference type="SMR" id="Q0DZ85"/>
<dbReference type="FunCoup" id="Q0DZ85">
    <property type="interactions" value="105"/>
</dbReference>
<dbReference type="STRING" id="39947.Q0DZ85"/>
<dbReference type="PaxDb" id="39947-Q0DZ85"/>
<dbReference type="eggNOG" id="ENOG502QPVQ">
    <property type="taxonomic scope" value="Eukaryota"/>
</dbReference>
<dbReference type="HOGENOM" id="CLU_027462_1_2_1"/>
<dbReference type="InParanoid" id="Q0DZ85"/>
<dbReference type="OrthoDB" id="406505at2759"/>
<dbReference type="Proteomes" id="UP000000763">
    <property type="component" value="Chromosome 2"/>
</dbReference>
<dbReference type="Proteomes" id="UP000059680">
    <property type="component" value="Chromosome 2"/>
</dbReference>
<dbReference type="GO" id="GO:0005576">
    <property type="term" value="C:extracellular region"/>
    <property type="evidence" value="ECO:0007669"/>
    <property type="project" value="UniProtKB-KW"/>
</dbReference>
<dbReference type="GO" id="GO:0016020">
    <property type="term" value="C:membrane"/>
    <property type="evidence" value="ECO:0007669"/>
    <property type="project" value="UniProtKB-SubCell"/>
</dbReference>
<dbReference type="GO" id="GO:0009828">
    <property type="term" value="P:plant-type cell wall loosening"/>
    <property type="evidence" value="ECO:0000250"/>
    <property type="project" value="UniProtKB"/>
</dbReference>
<dbReference type="GO" id="GO:0019953">
    <property type="term" value="P:sexual reproduction"/>
    <property type="evidence" value="ECO:0007669"/>
    <property type="project" value="InterPro"/>
</dbReference>
<dbReference type="GO" id="GO:0006949">
    <property type="term" value="P:syncytium formation"/>
    <property type="evidence" value="ECO:0000318"/>
    <property type="project" value="GO_Central"/>
</dbReference>
<dbReference type="CDD" id="cd22275">
    <property type="entry name" value="DPBB_EXPB_N"/>
    <property type="match status" value="1"/>
</dbReference>
<dbReference type="FunFam" id="2.60.40.760:FF:000002">
    <property type="entry name" value="Beta-expansin 3"/>
    <property type="match status" value="1"/>
</dbReference>
<dbReference type="FunFam" id="2.40.40.10:FF:000004">
    <property type="entry name" value="Expansin B3"/>
    <property type="match status" value="1"/>
</dbReference>
<dbReference type="Gene3D" id="2.60.40.760">
    <property type="entry name" value="Expansin, cellulose-binding-like domain"/>
    <property type="match status" value="1"/>
</dbReference>
<dbReference type="Gene3D" id="2.40.40.10">
    <property type="entry name" value="RlpA-like domain"/>
    <property type="match status" value="1"/>
</dbReference>
<dbReference type="InterPro" id="IPR007118">
    <property type="entry name" value="Expan_Lol_pI"/>
</dbReference>
<dbReference type="InterPro" id="IPR007112">
    <property type="entry name" value="Expansin/allergen_DPBB_dom"/>
</dbReference>
<dbReference type="InterPro" id="IPR007117">
    <property type="entry name" value="Expansin_CBD"/>
</dbReference>
<dbReference type="InterPro" id="IPR036749">
    <property type="entry name" value="Expansin_CBD_sf"/>
</dbReference>
<dbReference type="InterPro" id="IPR005795">
    <property type="entry name" value="LolPI"/>
</dbReference>
<dbReference type="InterPro" id="IPR009009">
    <property type="entry name" value="RlpA-like_DPBB"/>
</dbReference>
<dbReference type="InterPro" id="IPR036908">
    <property type="entry name" value="RlpA-like_sf"/>
</dbReference>
<dbReference type="PANTHER" id="PTHR31692">
    <property type="entry name" value="EXPANSIN-B3"/>
    <property type="match status" value="1"/>
</dbReference>
<dbReference type="PANTHER" id="PTHR31692:SF5">
    <property type="entry name" value="EXPANSIN-B3"/>
    <property type="match status" value="1"/>
</dbReference>
<dbReference type="Pfam" id="PF03330">
    <property type="entry name" value="DPBB_1"/>
    <property type="match status" value="1"/>
</dbReference>
<dbReference type="Pfam" id="PF01357">
    <property type="entry name" value="Expansin_C"/>
    <property type="match status" value="1"/>
</dbReference>
<dbReference type="PRINTS" id="PR01225">
    <property type="entry name" value="EXPANSNFAMLY"/>
</dbReference>
<dbReference type="PRINTS" id="PR00829">
    <property type="entry name" value="LOLP1ALLERGN"/>
</dbReference>
<dbReference type="SMART" id="SM00837">
    <property type="entry name" value="DPBB_1"/>
    <property type="match status" value="1"/>
</dbReference>
<dbReference type="SUPFAM" id="SSF50685">
    <property type="entry name" value="Barwin-like endoglucanases"/>
    <property type="match status" value="1"/>
</dbReference>
<dbReference type="SUPFAM" id="SSF49590">
    <property type="entry name" value="PHL pollen allergen"/>
    <property type="match status" value="1"/>
</dbReference>
<dbReference type="PROSITE" id="PS50843">
    <property type="entry name" value="EXPANSIN_CBD"/>
    <property type="match status" value="1"/>
</dbReference>
<dbReference type="PROSITE" id="PS50842">
    <property type="entry name" value="EXPANSIN_EG45"/>
    <property type="match status" value="1"/>
</dbReference>
<name>EXB16_ORYSJ</name>
<protein>
    <recommendedName>
        <fullName>Expansin-B16</fullName>
    </recommendedName>
    <alternativeName>
        <fullName>Beta-expansin-16</fullName>
    </alternativeName>
    <alternativeName>
        <fullName>OsEXPB16</fullName>
    </alternativeName>
    <alternativeName>
        <fullName>OsaEXPb1.14</fullName>
    </alternativeName>
</protein>
<feature type="signal peptide" evidence="2">
    <location>
        <begin position="1"/>
        <end position="25"/>
    </location>
</feature>
<feature type="chain" id="PRO_0000315351" description="Expansin-B16">
    <location>
        <begin position="26"/>
        <end position="272"/>
    </location>
</feature>
<feature type="domain" description="Expansin-like EG45" evidence="4">
    <location>
        <begin position="63"/>
        <end position="173"/>
    </location>
</feature>
<feature type="domain" description="Expansin-like CBD" evidence="3">
    <location>
        <begin position="186"/>
        <end position="267"/>
    </location>
</feature>
<feature type="disulfide bond" evidence="4">
    <location>
        <begin position="66"/>
        <end position="95"/>
    </location>
</feature>
<feature type="disulfide bond" evidence="4">
    <location>
        <begin position="98"/>
        <end position="168"/>
    </location>
</feature>
<feature type="disulfide bond" evidence="4">
    <location>
        <begin position="103"/>
        <end position="109"/>
    </location>
</feature>